<dbReference type="EMBL" id="AM933173">
    <property type="protein sequence ID" value="CAR39381.1"/>
    <property type="molecule type" value="Genomic_DNA"/>
</dbReference>
<dbReference type="RefSeq" id="WP_000059088.1">
    <property type="nucleotide sequence ID" value="NC_011274.1"/>
</dbReference>
<dbReference type="SMR" id="B5RFY7"/>
<dbReference type="KEGG" id="seg:SG3593"/>
<dbReference type="HOGENOM" id="CLU_026910_0_1_6"/>
<dbReference type="Proteomes" id="UP000008321">
    <property type="component" value="Chromosome"/>
</dbReference>
<dbReference type="GO" id="GO:0005737">
    <property type="term" value="C:cytoplasm"/>
    <property type="evidence" value="ECO:0007669"/>
    <property type="project" value="UniProtKB-SubCell"/>
</dbReference>
<dbReference type="GO" id="GO:0005886">
    <property type="term" value="C:plasma membrane"/>
    <property type="evidence" value="ECO:0007669"/>
    <property type="project" value="TreeGrafter"/>
</dbReference>
<dbReference type="GO" id="GO:0005524">
    <property type="term" value="F:ATP binding"/>
    <property type="evidence" value="ECO:0007669"/>
    <property type="project" value="UniProtKB-UniRule"/>
</dbReference>
<dbReference type="GO" id="GO:0016887">
    <property type="term" value="F:ATP hydrolysis activity"/>
    <property type="evidence" value="ECO:0007669"/>
    <property type="project" value="InterPro"/>
</dbReference>
<dbReference type="GO" id="GO:0003688">
    <property type="term" value="F:DNA replication origin binding"/>
    <property type="evidence" value="ECO:0007669"/>
    <property type="project" value="UniProtKB-UniRule"/>
</dbReference>
<dbReference type="GO" id="GO:0008289">
    <property type="term" value="F:lipid binding"/>
    <property type="evidence" value="ECO:0007669"/>
    <property type="project" value="UniProtKB-KW"/>
</dbReference>
<dbReference type="GO" id="GO:0006270">
    <property type="term" value="P:DNA replication initiation"/>
    <property type="evidence" value="ECO:0007669"/>
    <property type="project" value="UniProtKB-UniRule"/>
</dbReference>
<dbReference type="GO" id="GO:0006275">
    <property type="term" value="P:regulation of DNA replication"/>
    <property type="evidence" value="ECO:0007669"/>
    <property type="project" value="UniProtKB-UniRule"/>
</dbReference>
<dbReference type="CDD" id="cd00009">
    <property type="entry name" value="AAA"/>
    <property type="match status" value="1"/>
</dbReference>
<dbReference type="CDD" id="cd06571">
    <property type="entry name" value="Bac_DnaA_C"/>
    <property type="match status" value="1"/>
</dbReference>
<dbReference type="FunFam" id="1.10.1750.10:FF:000001">
    <property type="entry name" value="Chromosomal replication initiator protein DnaA"/>
    <property type="match status" value="1"/>
</dbReference>
<dbReference type="FunFam" id="1.10.8.60:FF:000003">
    <property type="entry name" value="Chromosomal replication initiator protein DnaA"/>
    <property type="match status" value="1"/>
</dbReference>
<dbReference type="FunFam" id="3.30.300.180:FF:000001">
    <property type="entry name" value="Chromosomal replication initiator protein DnaA"/>
    <property type="match status" value="1"/>
</dbReference>
<dbReference type="FunFam" id="3.40.50.300:FF:000103">
    <property type="entry name" value="Chromosomal replication initiator protein DnaA"/>
    <property type="match status" value="1"/>
</dbReference>
<dbReference type="Gene3D" id="1.10.1750.10">
    <property type="match status" value="1"/>
</dbReference>
<dbReference type="Gene3D" id="1.10.8.60">
    <property type="match status" value="1"/>
</dbReference>
<dbReference type="Gene3D" id="3.30.300.180">
    <property type="match status" value="1"/>
</dbReference>
<dbReference type="Gene3D" id="3.40.50.300">
    <property type="entry name" value="P-loop containing nucleotide triphosphate hydrolases"/>
    <property type="match status" value="1"/>
</dbReference>
<dbReference type="HAMAP" id="MF_00377">
    <property type="entry name" value="DnaA_bact"/>
    <property type="match status" value="1"/>
</dbReference>
<dbReference type="InterPro" id="IPR003593">
    <property type="entry name" value="AAA+_ATPase"/>
</dbReference>
<dbReference type="InterPro" id="IPR001957">
    <property type="entry name" value="Chromosome_initiator_DnaA"/>
</dbReference>
<dbReference type="InterPro" id="IPR020591">
    <property type="entry name" value="Chromosome_initiator_DnaA-like"/>
</dbReference>
<dbReference type="InterPro" id="IPR018312">
    <property type="entry name" value="Chromosome_initiator_DnaA_CS"/>
</dbReference>
<dbReference type="InterPro" id="IPR013159">
    <property type="entry name" value="DnaA_C"/>
</dbReference>
<dbReference type="InterPro" id="IPR013317">
    <property type="entry name" value="DnaA_dom"/>
</dbReference>
<dbReference type="InterPro" id="IPR024633">
    <property type="entry name" value="DnaA_N_dom"/>
</dbReference>
<dbReference type="InterPro" id="IPR038454">
    <property type="entry name" value="DnaA_N_sf"/>
</dbReference>
<dbReference type="InterPro" id="IPR027417">
    <property type="entry name" value="P-loop_NTPase"/>
</dbReference>
<dbReference type="InterPro" id="IPR010921">
    <property type="entry name" value="Trp_repressor/repl_initiator"/>
</dbReference>
<dbReference type="NCBIfam" id="TIGR00362">
    <property type="entry name" value="DnaA"/>
    <property type="match status" value="1"/>
</dbReference>
<dbReference type="PANTHER" id="PTHR30050">
    <property type="entry name" value="CHROMOSOMAL REPLICATION INITIATOR PROTEIN DNAA"/>
    <property type="match status" value="1"/>
</dbReference>
<dbReference type="PANTHER" id="PTHR30050:SF2">
    <property type="entry name" value="CHROMOSOMAL REPLICATION INITIATOR PROTEIN DNAA"/>
    <property type="match status" value="1"/>
</dbReference>
<dbReference type="Pfam" id="PF00308">
    <property type="entry name" value="Bac_DnaA"/>
    <property type="match status" value="1"/>
</dbReference>
<dbReference type="Pfam" id="PF08299">
    <property type="entry name" value="Bac_DnaA_C"/>
    <property type="match status" value="1"/>
</dbReference>
<dbReference type="Pfam" id="PF11638">
    <property type="entry name" value="DnaA_N"/>
    <property type="match status" value="1"/>
</dbReference>
<dbReference type="PRINTS" id="PR00051">
    <property type="entry name" value="DNAA"/>
</dbReference>
<dbReference type="SMART" id="SM00382">
    <property type="entry name" value="AAA"/>
    <property type="match status" value="1"/>
</dbReference>
<dbReference type="SMART" id="SM00760">
    <property type="entry name" value="Bac_DnaA_C"/>
    <property type="match status" value="1"/>
</dbReference>
<dbReference type="SUPFAM" id="SSF52540">
    <property type="entry name" value="P-loop containing nucleoside triphosphate hydrolases"/>
    <property type="match status" value="1"/>
</dbReference>
<dbReference type="SUPFAM" id="SSF48295">
    <property type="entry name" value="TrpR-like"/>
    <property type="match status" value="1"/>
</dbReference>
<dbReference type="PROSITE" id="PS01008">
    <property type="entry name" value="DNAA"/>
    <property type="match status" value="1"/>
</dbReference>
<proteinExistence type="inferred from homology"/>
<keyword id="KW-0067">ATP-binding</keyword>
<keyword id="KW-0963">Cytoplasm</keyword>
<keyword id="KW-0235">DNA replication</keyword>
<keyword id="KW-0238">DNA-binding</keyword>
<keyword id="KW-0446">Lipid-binding</keyword>
<keyword id="KW-0547">Nucleotide-binding</keyword>
<comment type="function">
    <text evidence="1">Plays an essential role in the initiation and regulation of chromosomal replication. ATP-DnaA binds to the origin of replication (oriC) to initiate formation of the DNA replication initiation complex once per cell cycle. Binds the DnaA box (a 9 base pair repeat at the origin) and separates the double-stranded (ds)DNA. Forms a right-handed helical filament on oriC DNA; dsDNA binds to the exterior of the filament while single-stranded (ss)DNA is stabiized in the filament's interior. The ATP-DnaA-oriC complex binds and stabilizes one strand of the AT-rich DNA unwinding element (DUE), permitting loading of DNA polymerase. After initiation quickly degrades to an ADP-DnaA complex that is not apt for DNA replication. Binds acidic phospholipids.</text>
</comment>
<comment type="subunit">
    <text evidence="1">Oligomerizes as a right-handed, spiral filament on DNA at oriC.</text>
</comment>
<comment type="subcellular location">
    <subcellularLocation>
        <location evidence="1">Cytoplasm</location>
    </subcellularLocation>
</comment>
<comment type="domain">
    <text evidence="1">Domain I is involved in oligomerization and binding regulators, domain II is flexibile and of varying length in different bacteria, domain III forms the AAA+ region, while domain IV binds dsDNA.</text>
</comment>
<comment type="similarity">
    <text evidence="1">Belongs to the DnaA family.</text>
</comment>
<sequence>MSLSLWQQCLARLQDELPATEFSMWIRPLQAELRDNTLALYAPNRFVLDWVRDKYLNNINGLLNTFCGADAPQLRFEVGTKPVTQTLKTPVHNVVAPTQTTTAQPQRVAPAARSGWDNVPAPAEPTYRSNVNVKHTFDNFVEGKSNQLARAAARQVADNPGGAYNPLFLYGGTGLGKTHLLHAVGNGIMARKPNAKVVYMHSERFVQDMVKALQNNAIEEFKRYYRSVDALLIDDIQFFANKERSQEEFFHTFNALLEGNQQIILTSDRYPKEINGVEDRLKSRFGWGLTVAIEPPELETRVAILMKKADENDIRLPGEVAFFIAKRLRSNVRELEGALNRVIANANFTGRAITIDFVREALRDLLALQEKLVTIDNIQKTVAEYYKIKIADLLSKRRSRSVARPRQMAMALAKELTNHSLPEIGDAFGGRDHTTVLHACRKIEQLREESHDIKEDFSNLIRTLSS</sequence>
<protein>
    <recommendedName>
        <fullName evidence="1">Chromosomal replication initiator protein DnaA</fullName>
    </recommendedName>
</protein>
<feature type="chain" id="PRO_1000122011" description="Chromosomal replication initiator protein DnaA">
    <location>
        <begin position="1"/>
        <end position="466"/>
    </location>
</feature>
<feature type="region of interest" description="Domain I, interacts with DnaA modulators" evidence="1">
    <location>
        <begin position="1"/>
        <end position="86"/>
    </location>
</feature>
<feature type="region of interest" description="Domain II" evidence="1">
    <location>
        <begin position="86"/>
        <end position="129"/>
    </location>
</feature>
<feature type="region of interest" description="Domain III, AAA+ region" evidence="1">
    <location>
        <begin position="130"/>
        <end position="346"/>
    </location>
</feature>
<feature type="region of interest" description="Domain IV, binds dsDNA" evidence="1">
    <location>
        <begin position="347"/>
        <end position="466"/>
    </location>
</feature>
<feature type="binding site" evidence="1">
    <location>
        <position position="174"/>
    </location>
    <ligand>
        <name>ATP</name>
        <dbReference type="ChEBI" id="CHEBI:30616"/>
    </ligand>
</feature>
<feature type="binding site" evidence="1">
    <location>
        <position position="176"/>
    </location>
    <ligand>
        <name>ATP</name>
        <dbReference type="ChEBI" id="CHEBI:30616"/>
    </ligand>
</feature>
<feature type="binding site" evidence="1">
    <location>
        <position position="177"/>
    </location>
    <ligand>
        <name>ATP</name>
        <dbReference type="ChEBI" id="CHEBI:30616"/>
    </ligand>
</feature>
<feature type="binding site" evidence="1">
    <location>
        <position position="178"/>
    </location>
    <ligand>
        <name>ATP</name>
        <dbReference type="ChEBI" id="CHEBI:30616"/>
    </ligand>
</feature>
<name>DNAA_SALG2</name>
<reference key="1">
    <citation type="journal article" date="2008" name="Genome Res.">
        <title>Comparative genome analysis of Salmonella enteritidis PT4 and Salmonella gallinarum 287/91 provides insights into evolutionary and host adaptation pathways.</title>
        <authorList>
            <person name="Thomson N.R."/>
            <person name="Clayton D.J."/>
            <person name="Windhorst D."/>
            <person name="Vernikos G."/>
            <person name="Davidson S."/>
            <person name="Churcher C."/>
            <person name="Quail M.A."/>
            <person name="Stevens M."/>
            <person name="Jones M.A."/>
            <person name="Watson M."/>
            <person name="Barron A."/>
            <person name="Layton A."/>
            <person name="Pickard D."/>
            <person name="Kingsley R.A."/>
            <person name="Bignell A."/>
            <person name="Clark L."/>
            <person name="Harris B."/>
            <person name="Ormond D."/>
            <person name="Abdellah Z."/>
            <person name="Brooks K."/>
            <person name="Cherevach I."/>
            <person name="Chillingworth T."/>
            <person name="Woodward J."/>
            <person name="Norberczak H."/>
            <person name="Lord A."/>
            <person name="Arrowsmith C."/>
            <person name="Jagels K."/>
            <person name="Moule S."/>
            <person name="Mungall K."/>
            <person name="Saunders M."/>
            <person name="Whitehead S."/>
            <person name="Chabalgoity J.A."/>
            <person name="Maskell D."/>
            <person name="Humphreys T."/>
            <person name="Roberts M."/>
            <person name="Barrow P.A."/>
            <person name="Dougan G."/>
            <person name="Parkhill J."/>
        </authorList>
    </citation>
    <scope>NUCLEOTIDE SEQUENCE [LARGE SCALE GENOMIC DNA]</scope>
    <source>
        <strain>287/91 / NCTC 13346</strain>
    </source>
</reference>
<evidence type="ECO:0000255" key="1">
    <source>
        <dbReference type="HAMAP-Rule" id="MF_00377"/>
    </source>
</evidence>
<gene>
    <name evidence="1" type="primary">dnaA</name>
    <name type="ordered locus">SG3593</name>
</gene>
<accession>B5RFY7</accession>
<organism>
    <name type="scientific">Salmonella gallinarum (strain 287/91 / NCTC 13346)</name>
    <dbReference type="NCBI Taxonomy" id="550538"/>
    <lineage>
        <taxon>Bacteria</taxon>
        <taxon>Pseudomonadati</taxon>
        <taxon>Pseudomonadota</taxon>
        <taxon>Gammaproteobacteria</taxon>
        <taxon>Enterobacterales</taxon>
        <taxon>Enterobacteriaceae</taxon>
        <taxon>Salmonella</taxon>
    </lineage>
</organism>